<feature type="chain" id="PRO_1000202317" description="Elongation factor 2">
    <location>
        <begin position="1"/>
        <end position="736"/>
    </location>
</feature>
<feature type="domain" description="tr-type G">
    <location>
        <begin position="18"/>
        <end position="234"/>
    </location>
</feature>
<feature type="binding site" evidence="1">
    <location>
        <begin position="27"/>
        <end position="34"/>
    </location>
    <ligand>
        <name>GTP</name>
        <dbReference type="ChEBI" id="CHEBI:37565"/>
    </ligand>
</feature>
<feature type="binding site" evidence="1">
    <location>
        <begin position="93"/>
        <end position="97"/>
    </location>
    <ligand>
        <name>GTP</name>
        <dbReference type="ChEBI" id="CHEBI:37565"/>
    </ligand>
</feature>
<feature type="binding site" evidence="1">
    <location>
        <begin position="147"/>
        <end position="150"/>
    </location>
    <ligand>
        <name>GTP</name>
        <dbReference type="ChEBI" id="CHEBI:37565"/>
    </ligand>
</feature>
<feature type="modified residue" description="Diphthamide" evidence="1">
    <location>
        <position position="603"/>
    </location>
</feature>
<organism>
    <name type="scientific">Saccharolobus islandicus (strain Y.N.15.51 / Yellowstone #2)</name>
    <name type="common">Sulfolobus islandicus</name>
    <dbReference type="NCBI Taxonomy" id="419942"/>
    <lineage>
        <taxon>Archaea</taxon>
        <taxon>Thermoproteota</taxon>
        <taxon>Thermoprotei</taxon>
        <taxon>Sulfolobales</taxon>
        <taxon>Sulfolobaceae</taxon>
        <taxon>Saccharolobus</taxon>
    </lineage>
</organism>
<reference key="1">
    <citation type="journal article" date="2009" name="Proc. Natl. Acad. Sci. U.S.A.">
        <title>Biogeography of the Sulfolobus islandicus pan-genome.</title>
        <authorList>
            <person name="Reno M.L."/>
            <person name="Held N.L."/>
            <person name="Fields C.J."/>
            <person name="Burke P.V."/>
            <person name="Whitaker R.J."/>
        </authorList>
    </citation>
    <scope>NUCLEOTIDE SEQUENCE [LARGE SCALE GENOMIC DNA]</scope>
    <source>
        <strain>Y.N.15.51 / Yellowstone #2</strain>
    </source>
</reference>
<name>EF2_SACI1</name>
<gene>
    <name evidence="1" type="primary">fusA</name>
    <name type="ordered locus">YN1551_1435</name>
</gene>
<dbReference type="EMBL" id="CP001404">
    <property type="protein sequence ID" value="ACP48526.1"/>
    <property type="molecule type" value="Genomic_DNA"/>
</dbReference>
<dbReference type="RefSeq" id="WP_012711411.1">
    <property type="nucleotide sequence ID" value="NC_012623.1"/>
</dbReference>
<dbReference type="SMR" id="C3NHB6"/>
<dbReference type="KEGG" id="sin:YN1551_1435"/>
<dbReference type="HOGENOM" id="CLU_002794_11_1_2"/>
<dbReference type="Proteomes" id="UP000006818">
    <property type="component" value="Chromosome"/>
</dbReference>
<dbReference type="GO" id="GO:0005829">
    <property type="term" value="C:cytosol"/>
    <property type="evidence" value="ECO:0007669"/>
    <property type="project" value="TreeGrafter"/>
</dbReference>
<dbReference type="GO" id="GO:1990904">
    <property type="term" value="C:ribonucleoprotein complex"/>
    <property type="evidence" value="ECO:0007669"/>
    <property type="project" value="TreeGrafter"/>
</dbReference>
<dbReference type="GO" id="GO:0005525">
    <property type="term" value="F:GTP binding"/>
    <property type="evidence" value="ECO:0007669"/>
    <property type="project" value="UniProtKB-UniRule"/>
</dbReference>
<dbReference type="GO" id="GO:0003924">
    <property type="term" value="F:GTPase activity"/>
    <property type="evidence" value="ECO:0007669"/>
    <property type="project" value="InterPro"/>
</dbReference>
<dbReference type="GO" id="GO:0003746">
    <property type="term" value="F:translation elongation factor activity"/>
    <property type="evidence" value="ECO:0007669"/>
    <property type="project" value="UniProtKB-UniRule"/>
</dbReference>
<dbReference type="CDD" id="cd01681">
    <property type="entry name" value="aeEF2_snRNP_like_IV"/>
    <property type="match status" value="1"/>
</dbReference>
<dbReference type="CDD" id="cd01885">
    <property type="entry name" value="EF2"/>
    <property type="match status" value="1"/>
</dbReference>
<dbReference type="CDD" id="cd16268">
    <property type="entry name" value="EF2_II"/>
    <property type="match status" value="1"/>
</dbReference>
<dbReference type="CDD" id="cd16261">
    <property type="entry name" value="EF2_snRNP_III"/>
    <property type="match status" value="1"/>
</dbReference>
<dbReference type="CDD" id="cd01514">
    <property type="entry name" value="Elongation_Factor_C"/>
    <property type="match status" value="1"/>
</dbReference>
<dbReference type="FunFam" id="3.30.230.10:FF:000009">
    <property type="entry name" value="116 kDa U5 small nuclear ribonucleoprotein component"/>
    <property type="match status" value="1"/>
</dbReference>
<dbReference type="FunFam" id="3.30.70.240:FF:000010">
    <property type="entry name" value="Elongation factor 2"/>
    <property type="match status" value="1"/>
</dbReference>
<dbReference type="FunFam" id="3.40.50.300:FF:000684">
    <property type="entry name" value="Elongation factor 2"/>
    <property type="match status" value="1"/>
</dbReference>
<dbReference type="FunFam" id="3.30.70.870:FF:000002">
    <property type="entry name" value="Translation elongation factor 2"/>
    <property type="match status" value="1"/>
</dbReference>
<dbReference type="Gene3D" id="3.30.230.10">
    <property type="match status" value="1"/>
</dbReference>
<dbReference type="Gene3D" id="3.30.70.240">
    <property type="match status" value="1"/>
</dbReference>
<dbReference type="Gene3D" id="3.30.70.870">
    <property type="entry name" value="Elongation Factor G (Translational Gtpase), domain 3"/>
    <property type="match status" value="1"/>
</dbReference>
<dbReference type="Gene3D" id="3.40.50.300">
    <property type="entry name" value="P-loop containing nucleotide triphosphate hydrolases"/>
    <property type="match status" value="1"/>
</dbReference>
<dbReference type="Gene3D" id="2.40.30.10">
    <property type="entry name" value="Translation factors"/>
    <property type="match status" value="1"/>
</dbReference>
<dbReference type="HAMAP" id="MF_00054_A">
    <property type="entry name" value="EF_G_EF_2_A"/>
    <property type="match status" value="1"/>
</dbReference>
<dbReference type="InterPro" id="IPR041095">
    <property type="entry name" value="EFG_II"/>
</dbReference>
<dbReference type="InterPro" id="IPR035647">
    <property type="entry name" value="EFG_III/V"/>
</dbReference>
<dbReference type="InterPro" id="IPR000640">
    <property type="entry name" value="EFG_V-like"/>
</dbReference>
<dbReference type="InterPro" id="IPR004161">
    <property type="entry name" value="EFTu-like_2"/>
</dbReference>
<dbReference type="InterPro" id="IPR031157">
    <property type="entry name" value="G_TR_CS"/>
</dbReference>
<dbReference type="InterPro" id="IPR027417">
    <property type="entry name" value="P-loop_NTPase"/>
</dbReference>
<dbReference type="InterPro" id="IPR020568">
    <property type="entry name" value="Ribosomal_Su5_D2-typ_SF"/>
</dbReference>
<dbReference type="InterPro" id="IPR014721">
    <property type="entry name" value="Ribsml_uS5_D2-typ_fold_subgr"/>
</dbReference>
<dbReference type="InterPro" id="IPR005225">
    <property type="entry name" value="Small_GTP-bd"/>
</dbReference>
<dbReference type="InterPro" id="IPR000795">
    <property type="entry name" value="T_Tr_GTP-bd_dom"/>
</dbReference>
<dbReference type="InterPro" id="IPR009000">
    <property type="entry name" value="Transl_B-barrel_sf"/>
</dbReference>
<dbReference type="InterPro" id="IPR004543">
    <property type="entry name" value="Transl_elong_EFG/EF2_arc"/>
</dbReference>
<dbReference type="InterPro" id="IPR005517">
    <property type="entry name" value="Transl_elong_EFG/EF2_IV"/>
</dbReference>
<dbReference type="NCBIfam" id="TIGR00490">
    <property type="entry name" value="aEF-2"/>
    <property type="match status" value="1"/>
</dbReference>
<dbReference type="NCBIfam" id="TIGR00231">
    <property type="entry name" value="small_GTP"/>
    <property type="match status" value="1"/>
</dbReference>
<dbReference type="PANTHER" id="PTHR42908:SF3">
    <property type="entry name" value="ELONGATION FACTOR-LIKE GTPASE 1"/>
    <property type="match status" value="1"/>
</dbReference>
<dbReference type="PANTHER" id="PTHR42908">
    <property type="entry name" value="TRANSLATION ELONGATION FACTOR-RELATED"/>
    <property type="match status" value="1"/>
</dbReference>
<dbReference type="Pfam" id="PF00679">
    <property type="entry name" value="EFG_C"/>
    <property type="match status" value="1"/>
</dbReference>
<dbReference type="Pfam" id="PF14492">
    <property type="entry name" value="EFG_III"/>
    <property type="match status" value="1"/>
</dbReference>
<dbReference type="Pfam" id="PF03764">
    <property type="entry name" value="EFG_IV"/>
    <property type="match status" value="1"/>
</dbReference>
<dbReference type="Pfam" id="PF00009">
    <property type="entry name" value="GTP_EFTU"/>
    <property type="match status" value="1"/>
</dbReference>
<dbReference type="Pfam" id="PF03144">
    <property type="entry name" value="GTP_EFTU_D2"/>
    <property type="match status" value="1"/>
</dbReference>
<dbReference type="PRINTS" id="PR00315">
    <property type="entry name" value="ELONGATNFCT"/>
</dbReference>
<dbReference type="SMART" id="SM00838">
    <property type="entry name" value="EFG_C"/>
    <property type="match status" value="1"/>
</dbReference>
<dbReference type="SMART" id="SM00889">
    <property type="entry name" value="EFG_IV"/>
    <property type="match status" value="1"/>
</dbReference>
<dbReference type="SUPFAM" id="SSF54980">
    <property type="entry name" value="EF-G C-terminal domain-like"/>
    <property type="match status" value="2"/>
</dbReference>
<dbReference type="SUPFAM" id="SSF52540">
    <property type="entry name" value="P-loop containing nucleoside triphosphate hydrolases"/>
    <property type="match status" value="1"/>
</dbReference>
<dbReference type="SUPFAM" id="SSF54211">
    <property type="entry name" value="Ribosomal protein S5 domain 2-like"/>
    <property type="match status" value="1"/>
</dbReference>
<dbReference type="SUPFAM" id="SSF50447">
    <property type="entry name" value="Translation proteins"/>
    <property type="match status" value="1"/>
</dbReference>
<dbReference type="PROSITE" id="PS00301">
    <property type="entry name" value="G_TR_1"/>
    <property type="match status" value="1"/>
</dbReference>
<dbReference type="PROSITE" id="PS51722">
    <property type="entry name" value="G_TR_2"/>
    <property type="match status" value="1"/>
</dbReference>
<keyword id="KW-0963">Cytoplasm</keyword>
<keyword id="KW-0251">Elongation factor</keyword>
<keyword id="KW-0342">GTP-binding</keyword>
<keyword id="KW-0547">Nucleotide-binding</keyword>
<keyword id="KW-0648">Protein biosynthesis</keyword>
<sequence>MPRYKTVEQVLSLMKDRTRVRNIGIIAHVDHGKTTTSDTLLAASGIISPKVAGEALALDYLSVEQQRGITVKAANISLYHEAEGKGYVINLIDTPGHVDFSGRVTRSLRVLDGSIVVVDAVEGIMTQTETVLRQSLEERVRPILFINKVDRLVKELKLSPQEMLNRLLDIIRQVNNLIDMYGEPEFKEKWMINPQAGNVIFGSAKDKWGFSLPMAQKKGINMKNVIDAYTASDKSKLEELAAQAPINEALLDAAIKFVPNPIEAQKYRIPKIWKGDLDNELAKAMLNADPNGPIVFMITDMKVDPHAGLVATGRVFSGTLRSGEELWLVNAKTSQRILQVSLYMGPTRELAEEIPAGNIAAVLGLDRARSGETAISVGFSNVQGSFERLHYISEPVVTIAVEPKNPKDLTKMIDALRKLSIEDPNLVVKINEETGEYLLSGMGFLHLEVSLQLLRENYGIDVVTTPPIVVYRESIRAKSQVFEGKSPNKHNKFYLSVEPLNDKTIELISNGTIREDMDSKEMAKILRDEASWDYDEAKRIIAIDENVNVFVDLTSGVQHLREVMDTVLQGFRLAMKEGPLAHEPIRGVKVILHDAVIHEDPAHRGPAQIYPAVRNSIFAGFLTSRPTLLEPIQKLDIRVPADLIGNVTAVITRKRGKILDVSQIANMSRITAEIPVSESYDMASELRGSTGGRAFWGTEFSRWAPVPDSILLDVVTKIRERKGLPKELPKVEDFLS</sequence>
<evidence type="ECO:0000255" key="1">
    <source>
        <dbReference type="HAMAP-Rule" id="MF_00054"/>
    </source>
</evidence>
<proteinExistence type="inferred from homology"/>
<accession>C3NHB6</accession>
<protein>
    <recommendedName>
        <fullName evidence="1">Elongation factor 2</fullName>
        <shortName evidence="1">EF-2</shortName>
    </recommendedName>
</protein>
<comment type="function">
    <text evidence="1">Catalyzes the GTP-dependent ribosomal translocation step during translation elongation. During this step, the ribosome changes from the pre-translocational (PRE) to the post-translocational (POST) state as the newly formed A-site-bound peptidyl-tRNA and P-site-bound deacylated tRNA move to the P and E sites, respectively. Catalyzes the coordinated movement of the two tRNA molecules, the mRNA and conformational changes in the ribosome.</text>
</comment>
<comment type="subcellular location">
    <subcellularLocation>
        <location evidence="1">Cytoplasm</location>
    </subcellularLocation>
</comment>
<comment type="similarity">
    <text evidence="1">Belongs to the TRAFAC class translation factor GTPase superfamily. Classic translation factor GTPase family. EF-G/EF-2 subfamily.</text>
</comment>